<accession>Q9HQR5</accession>
<gene>
    <name type="ordered locus">VNG_1038C</name>
</gene>
<feature type="chain" id="PRO_0000367225" description="UPF0173 metal-dependent hydrolase VNG_1038C">
    <location>
        <begin position="1"/>
        <end position="240"/>
    </location>
</feature>
<reference key="1">
    <citation type="journal article" date="2000" name="Proc. Natl. Acad. Sci. U.S.A.">
        <title>Genome sequence of Halobacterium species NRC-1.</title>
        <authorList>
            <person name="Ng W.V."/>
            <person name="Kennedy S.P."/>
            <person name="Mahairas G.G."/>
            <person name="Berquist B."/>
            <person name="Pan M."/>
            <person name="Shukla H.D."/>
            <person name="Lasky S.R."/>
            <person name="Baliga N.S."/>
            <person name="Thorsson V."/>
            <person name="Sbrogna J."/>
            <person name="Swartzell S."/>
            <person name="Weir D."/>
            <person name="Hall J."/>
            <person name="Dahl T.A."/>
            <person name="Welti R."/>
            <person name="Goo Y.A."/>
            <person name="Leithauser B."/>
            <person name="Keller K."/>
            <person name="Cruz R."/>
            <person name="Danson M.J."/>
            <person name="Hough D.W."/>
            <person name="Maddocks D.G."/>
            <person name="Jablonski P.E."/>
            <person name="Krebs M.P."/>
            <person name="Angevine C.M."/>
            <person name="Dale H."/>
            <person name="Isenbarger T.A."/>
            <person name="Peck R.F."/>
            <person name="Pohlschroder M."/>
            <person name="Spudich J.L."/>
            <person name="Jung K.-H."/>
            <person name="Alam M."/>
            <person name="Freitas T."/>
            <person name="Hou S."/>
            <person name="Daniels C.J."/>
            <person name="Dennis P.P."/>
            <person name="Omer A.D."/>
            <person name="Ebhardt H."/>
            <person name="Lowe T.M."/>
            <person name="Liang P."/>
            <person name="Riley M."/>
            <person name="Hood L."/>
            <person name="DasSarma S."/>
        </authorList>
    </citation>
    <scope>NUCLEOTIDE SEQUENCE [LARGE SCALE GENOMIC DNA]</scope>
    <source>
        <strain>ATCC 700922 / JCM 11081 / NRC-1</strain>
    </source>
</reference>
<dbReference type="EMBL" id="AE004437">
    <property type="protein sequence ID" value="AAG19448.1"/>
    <property type="molecule type" value="Genomic_DNA"/>
</dbReference>
<dbReference type="PIR" id="D84260">
    <property type="entry name" value="D84260"/>
</dbReference>
<dbReference type="RefSeq" id="WP_010902743.1">
    <property type="nucleotide sequence ID" value="NC_002607.1"/>
</dbReference>
<dbReference type="SMR" id="Q9HQR5"/>
<dbReference type="STRING" id="64091.VNG_1038C"/>
<dbReference type="PaxDb" id="64091-VNG_1038C"/>
<dbReference type="KEGG" id="hal:VNG_1038C"/>
<dbReference type="PATRIC" id="fig|64091.14.peg.795"/>
<dbReference type="HOGENOM" id="CLU_070010_4_0_2"/>
<dbReference type="InParanoid" id="Q9HQR5"/>
<dbReference type="OrthoDB" id="28313at2157"/>
<dbReference type="PhylomeDB" id="Q9HQR5"/>
<dbReference type="Proteomes" id="UP000000554">
    <property type="component" value="Chromosome"/>
</dbReference>
<dbReference type="GO" id="GO:0016787">
    <property type="term" value="F:hydrolase activity"/>
    <property type="evidence" value="ECO:0000318"/>
    <property type="project" value="GO_Central"/>
</dbReference>
<dbReference type="Gene3D" id="3.60.15.10">
    <property type="entry name" value="Ribonuclease Z/Hydroxyacylglutathione hydrolase-like"/>
    <property type="match status" value="1"/>
</dbReference>
<dbReference type="HAMAP" id="MF_00457">
    <property type="entry name" value="UPF0173"/>
    <property type="match status" value="1"/>
</dbReference>
<dbReference type="InterPro" id="IPR001279">
    <property type="entry name" value="Metallo-B-lactamas"/>
</dbReference>
<dbReference type="InterPro" id="IPR036866">
    <property type="entry name" value="RibonucZ/Hydroxyglut_hydro"/>
</dbReference>
<dbReference type="InterPro" id="IPR022877">
    <property type="entry name" value="UPF0173"/>
</dbReference>
<dbReference type="InterPro" id="IPR050114">
    <property type="entry name" value="UPF0173_UPF0282_UlaG_hydrolase"/>
</dbReference>
<dbReference type="NCBIfam" id="NF001911">
    <property type="entry name" value="PRK00685.1"/>
    <property type="match status" value="1"/>
</dbReference>
<dbReference type="PANTHER" id="PTHR43546:SF3">
    <property type="entry name" value="UPF0173 METAL-DEPENDENT HYDROLASE MJ1163"/>
    <property type="match status" value="1"/>
</dbReference>
<dbReference type="PANTHER" id="PTHR43546">
    <property type="entry name" value="UPF0173 METAL-DEPENDENT HYDROLASE MJ1163-RELATED"/>
    <property type="match status" value="1"/>
</dbReference>
<dbReference type="Pfam" id="PF13483">
    <property type="entry name" value="Lactamase_B_3"/>
    <property type="match status" value="1"/>
</dbReference>
<dbReference type="SMART" id="SM00849">
    <property type="entry name" value="Lactamase_B"/>
    <property type="match status" value="1"/>
</dbReference>
<dbReference type="SUPFAM" id="SSF56281">
    <property type="entry name" value="Metallo-hydrolase/oxidoreductase"/>
    <property type="match status" value="1"/>
</dbReference>
<name>Y1038_HALSA</name>
<comment type="similarity">
    <text evidence="1">Belongs to the UPF0173 family.</text>
</comment>
<proteinExistence type="inferred from homology"/>
<organism>
    <name type="scientific">Halobacterium salinarum (strain ATCC 700922 / JCM 11081 / NRC-1)</name>
    <name type="common">Halobacterium halobium</name>
    <dbReference type="NCBI Taxonomy" id="64091"/>
    <lineage>
        <taxon>Archaea</taxon>
        <taxon>Methanobacteriati</taxon>
        <taxon>Methanobacteriota</taxon>
        <taxon>Stenosarchaea group</taxon>
        <taxon>Halobacteria</taxon>
        <taxon>Halobacteriales</taxon>
        <taxon>Halobacteriaceae</taxon>
        <taxon>Halobacterium</taxon>
        <taxon>Halobacterium salinarum NRC-34001</taxon>
    </lineage>
</organism>
<protein>
    <recommendedName>
        <fullName evidence="1">UPF0173 metal-dependent hydrolase VNG_1038C</fullName>
    </recommendedName>
</protein>
<keyword id="KW-0378">Hydrolase</keyword>
<keyword id="KW-1185">Reference proteome</keyword>
<evidence type="ECO:0000255" key="1">
    <source>
        <dbReference type="HAMAP-Rule" id="MF_00457"/>
    </source>
</evidence>
<sequence>MELTWFGHSTWRVTVGTTDLLVDPFFDNPHTDTAPSEVAVDHVLLTHGHADHIAHVGAFADTHTVGTPEVTGYVADETGVEDTTGMNLGGTVELGDAFVTMVRADHTNGLETGYEYSGGTPVGYVISDAAPTQTGDGDATTFYHAGDTSLQSEMKDVIGPYLDPDAAAVPVGDHFTMGPMQAAVAVDWLDVDVAFPMHYDTFPPIEVDTADFEREVNATGSQADVHVLDGDETVDLSDAL</sequence>